<organism>
    <name type="scientific">Azorhizobium caulinodans (strain ATCC 43989 / DSM 5975 / JCM 20966 / LMG 6465 / NBRC 14845 / NCIMB 13405 / ORS 571)</name>
    <dbReference type="NCBI Taxonomy" id="438753"/>
    <lineage>
        <taxon>Bacteria</taxon>
        <taxon>Pseudomonadati</taxon>
        <taxon>Pseudomonadota</taxon>
        <taxon>Alphaproteobacteria</taxon>
        <taxon>Hyphomicrobiales</taxon>
        <taxon>Xanthobacteraceae</taxon>
        <taxon>Azorhizobium</taxon>
    </lineage>
</organism>
<accession>P33217</accession>
<accession>A8IPA5</accession>
<gene>
    <name evidence="1" type="primary">fcl</name>
    <name type="synonym">nolK</name>
    <name type="ordered locus">AZC_3850</name>
</gene>
<keyword id="KW-0413">Isomerase</keyword>
<keyword id="KW-0511">Multifunctional enzyme</keyword>
<keyword id="KW-0521">NADP</keyword>
<keyword id="KW-0536">Nodulation</keyword>
<keyword id="KW-0560">Oxidoreductase</keyword>
<keyword id="KW-1185">Reference proteome</keyword>
<evidence type="ECO:0000255" key="1">
    <source>
        <dbReference type="HAMAP-Rule" id="MF_00956"/>
    </source>
</evidence>
<evidence type="ECO:0000269" key="2">
    <source>
    </source>
</evidence>
<evidence type="ECO:0000269" key="3">
    <source>
    </source>
</evidence>
<evidence type="ECO:0000305" key="4"/>
<name>FCL_AZOC5</name>
<protein>
    <recommendedName>
        <fullName evidence="1">GDP-L-fucose synthase</fullName>
        <ecNumber evidence="1">1.1.1.271</ecNumber>
    </recommendedName>
    <alternativeName>
        <fullName evidence="1">GDP-4-keto-6-deoxy-D-mannose-3,5-epimerase-4-reductase</fullName>
    </alternativeName>
    <alternativeName>
        <fullName>Nodulation protein NolK</fullName>
    </alternativeName>
</protein>
<reference key="1">
    <citation type="journal article" date="1992" name="Mol. Plant Microbe Interact.">
        <title>Identification of a new inducible nodulation gene in Azorhizobium caulinodans.</title>
        <authorList>
            <person name="Goethals K."/>
            <person name="Mergaert P."/>
            <person name="Gao M."/>
            <person name="Geelen D."/>
            <person name="van Montagu M."/>
            <person name="Holsters M."/>
        </authorList>
    </citation>
    <scope>NUCLEOTIDE SEQUENCE [GENOMIC DNA]</scope>
    <scope>INDUCTION</scope>
</reference>
<reference key="2">
    <citation type="submission" date="2007-04" db="EMBL/GenBank/DDBJ databases">
        <title>Complete genome sequence of the nitrogen-fixing bacterium Azorhizobium caulinodans ORS571.</title>
        <authorList>
            <person name="Lee K.B."/>
            <person name="Backer P.D."/>
            <person name="Aono T."/>
            <person name="Liu C.T."/>
            <person name="Suzuki S."/>
            <person name="Suzuki T."/>
            <person name="Kaneko T."/>
            <person name="Yamada M."/>
            <person name="Tabata S."/>
            <person name="Kupfer D.M."/>
            <person name="Najar F.Z."/>
            <person name="Wiley G.B."/>
            <person name="Roe B."/>
            <person name="Binnewies T."/>
            <person name="Ussery D."/>
            <person name="Vereecke D."/>
            <person name="Gevers D."/>
            <person name="Holsters M."/>
            <person name="Oyaizu H."/>
        </authorList>
    </citation>
    <scope>NUCLEOTIDE SEQUENCE [LARGE SCALE GENOMIC DNA]</scope>
    <source>
        <strain>ATCC 43989 / DSM 5975 / JCM 20966 / LMG 6465 / NBRC 14845 / NCIMB 13405 / ORS 571</strain>
    </source>
</reference>
<reference key="3">
    <citation type="journal article" date="1997" name="FEBS Lett.">
        <title>The nodulation gene nolK of Azorhizobium caulinodans is involved in the formation of GDP-fucose from GDP-mannose.</title>
        <authorList>
            <person name="Mergaert P."/>
            <person name="Van Montagu M."/>
            <person name="Holsters M."/>
        </authorList>
    </citation>
    <scope>PATHWAY</scope>
    <source>
        <strain>ATCC 43989 / DSM 5975 / JCM 20966 / LMG 6465 / NBRC 14845 / NCIMB 13405 / ORS 571</strain>
    </source>
</reference>
<proteinExistence type="evidence at transcript level"/>
<comment type="function">
    <text evidence="1">Catalyzes the two-step NADP-dependent conversion of GDP-4-dehydro-6-deoxy-D-mannose to GDP-fucose, involving an epimerase and a reductase reaction.</text>
</comment>
<comment type="catalytic activity">
    <reaction evidence="1">
        <text>GDP-beta-L-fucose + NADP(+) = GDP-4-dehydro-alpha-D-rhamnose + NADPH + H(+)</text>
        <dbReference type="Rhea" id="RHEA:18885"/>
        <dbReference type="ChEBI" id="CHEBI:15378"/>
        <dbReference type="ChEBI" id="CHEBI:57273"/>
        <dbReference type="ChEBI" id="CHEBI:57783"/>
        <dbReference type="ChEBI" id="CHEBI:57964"/>
        <dbReference type="ChEBI" id="CHEBI:58349"/>
        <dbReference type="EC" id="1.1.1.271"/>
    </reaction>
</comment>
<comment type="pathway">
    <text evidence="1 3">Nucleotide-sugar biosynthesis; GDP-L-fucose biosynthesis via de novo pathway; GDP-L-fucose from GDP-alpha-D-mannose: step 2/2.</text>
</comment>
<comment type="induction">
    <text evidence="2">By flavanone naringenin.</text>
</comment>
<comment type="similarity">
    <text evidence="1">Belongs to the NAD(P)-dependent epimerase/dehydratase family. Fucose synthase subfamily.</text>
</comment>
<comment type="sequence caution" evidence="4">
    <conflict type="erroneous initiation">
        <sequence resource="EMBL-CDS" id="AAB24744"/>
    </conflict>
</comment>
<comment type="sequence caution" evidence="4">
    <conflict type="erroneous initiation">
        <sequence resource="EMBL-CDS" id="BAF89848"/>
    </conflict>
</comment>
<feature type="chain" id="PRO_0000174359" description="GDP-L-fucose synthase">
    <location>
        <begin position="1"/>
        <end position="312"/>
    </location>
</feature>
<feature type="active site" description="Proton donor/acceptor" evidence="1">
    <location>
        <position position="136"/>
    </location>
</feature>
<feature type="binding site" evidence="1">
    <location>
        <begin position="11"/>
        <end position="17"/>
    </location>
    <ligand>
        <name>NADP(+)</name>
        <dbReference type="ChEBI" id="CHEBI:58349"/>
    </ligand>
</feature>
<feature type="binding site" evidence="1">
    <location>
        <position position="140"/>
    </location>
    <ligand>
        <name>NADP(+)</name>
        <dbReference type="ChEBI" id="CHEBI:58349"/>
    </ligand>
</feature>
<feature type="binding site" evidence="1">
    <location>
        <position position="179"/>
    </location>
    <ligand>
        <name>NADP(+)</name>
        <dbReference type="ChEBI" id="CHEBI:58349"/>
    </ligand>
</feature>
<feature type="binding site" evidence="1">
    <location>
        <position position="187"/>
    </location>
    <ligand>
        <name>substrate</name>
    </ligand>
</feature>
<feature type="binding site" evidence="1">
    <location>
        <position position="202"/>
    </location>
    <ligand>
        <name>substrate</name>
    </ligand>
</feature>
<feature type="binding site" evidence="1">
    <location>
        <position position="209"/>
    </location>
    <ligand>
        <name>substrate</name>
    </ligand>
</feature>
<feature type="site" description="Important for catalytic activity" evidence="1">
    <location>
        <position position="107"/>
    </location>
</feature>
<feature type="site" description="Important for catalytic activity" evidence="1">
    <location>
        <position position="109"/>
    </location>
</feature>
<dbReference type="EC" id="1.1.1.271" evidence="1"/>
<dbReference type="EMBL" id="S51942">
    <property type="protein sequence ID" value="AAB24744.1"/>
    <property type="status" value="ALT_INIT"/>
    <property type="molecule type" value="Genomic_DNA"/>
</dbReference>
<dbReference type="EMBL" id="AP009384">
    <property type="protein sequence ID" value="BAF89848.1"/>
    <property type="status" value="ALT_INIT"/>
    <property type="molecule type" value="Genomic_DNA"/>
</dbReference>
<dbReference type="SMR" id="P33217"/>
<dbReference type="STRING" id="438753.AZC_3850"/>
<dbReference type="KEGG" id="azc:AZC_3850"/>
<dbReference type="eggNOG" id="COG0451">
    <property type="taxonomic scope" value="Bacteria"/>
</dbReference>
<dbReference type="HOGENOM" id="CLU_007383_18_0_5"/>
<dbReference type="UniPathway" id="UPA00128">
    <property type="reaction ID" value="UER00191"/>
</dbReference>
<dbReference type="Proteomes" id="UP000000270">
    <property type="component" value="Chromosome"/>
</dbReference>
<dbReference type="GO" id="GO:0050577">
    <property type="term" value="F:GDP-L-fucose synthase activity"/>
    <property type="evidence" value="ECO:0007669"/>
    <property type="project" value="UniProtKB-UniRule"/>
</dbReference>
<dbReference type="GO" id="GO:0016853">
    <property type="term" value="F:isomerase activity"/>
    <property type="evidence" value="ECO:0007669"/>
    <property type="project" value="UniProtKB-KW"/>
</dbReference>
<dbReference type="GO" id="GO:0070401">
    <property type="term" value="F:NADP+ binding"/>
    <property type="evidence" value="ECO:0007669"/>
    <property type="project" value="UniProtKB-UniRule"/>
</dbReference>
<dbReference type="GO" id="GO:0042351">
    <property type="term" value="P:'de novo' GDP-L-fucose biosynthetic process"/>
    <property type="evidence" value="ECO:0007669"/>
    <property type="project" value="UniProtKB-UniRule"/>
</dbReference>
<dbReference type="CDD" id="cd05239">
    <property type="entry name" value="GDP_FS_SDR_e"/>
    <property type="match status" value="1"/>
</dbReference>
<dbReference type="Gene3D" id="3.40.50.720">
    <property type="entry name" value="NAD(P)-binding Rossmann-like Domain"/>
    <property type="match status" value="1"/>
</dbReference>
<dbReference type="Gene3D" id="3.90.25.10">
    <property type="entry name" value="UDP-galactose 4-epimerase, domain 1"/>
    <property type="match status" value="1"/>
</dbReference>
<dbReference type="HAMAP" id="MF_00956">
    <property type="entry name" value="GDP_fucose_synth"/>
    <property type="match status" value="1"/>
</dbReference>
<dbReference type="InterPro" id="IPR001509">
    <property type="entry name" value="Epimerase_deHydtase"/>
</dbReference>
<dbReference type="InterPro" id="IPR028614">
    <property type="entry name" value="GDP_fucose/colitose_synth"/>
</dbReference>
<dbReference type="InterPro" id="IPR036291">
    <property type="entry name" value="NAD(P)-bd_dom_sf"/>
</dbReference>
<dbReference type="PANTHER" id="PTHR43238">
    <property type="entry name" value="GDP-L-FUCOSE SYNTHASE"/>
    <property type="match status" value="1"/>
</dbReference>
<dbReference type="PANTHER" id="PTHR43238:SF1">
    <property type="entry name" value="GDP-L-FUCOSE SYNTHASE"/>
    <property type="match status" value="1"/>
</dbReference>
<dbReference type="Pfam" id="PF01370">
    <property type="entry name" value="Epimerase"/>
    <property type="match status" value="1"/>
</dbReference>
<dbReference type="SUPFAM" id="SSF51735">
    <property type="entry name" value="NAD(P)-binding Rossmann-fold domains"/>
    <property type="match status" value="1"/>
</dbReference>
<sequence length="312" mass="34301">MGKGKKLLITGGRGMVGRNLIACAARSGWEIIAPTSVDLDLRNAEAVEQYIRRQLPDVVVHAAGVVGGIHANIADPIHFLADNAAMALNVVMSSFRSEVVTLINLSSSCMYPACIEGPLKECDILRGPFEVTNEGYALAKTVGLKICEYIDKLPNFNYKTLIACNLYGVGDNFDPRRSHLLPAIIEKIHKASQCGSESVSIWGDGTARREFMFAYDFAKIIIKALEVPELIPSSMNVGVGKDLSVLEYYSLVARVIGWSGEFVYDLNRPVGMRSKLMDITHLTALGWVPERSLEGGIRSTYQYYITGNEVYE</sequence>